<sequence length="414" mass="45942">MQSWPVPHIDSVPGTPSPLHLYDSADGEVKRLNIKGETATMYVCGITPYDSTHLGHAATYLTFDLIYRQLLDNGYKVNYAQNITDVDDPLFERAERDGVDWRELGTSQINLFRSDMELLSVFPPQHFVGAMEAIDEITEMVQALLDAGAAYVVDDPDYPDVYASIEATKNFGYESNYSREQMETFFAERGGDPERPGKRDPLDALIWRAHREGEPAWESPFGPGRPGWHIECSAIATNRLGSSFDIQGGGSDLKFPHHEFSAAHAEAALGVERMAQSYVHTGMIGLEGTKMSKSLGNLVFVHKLVEAGVDPSAIRLGVFSGHYREDRDWSDEVLHTAQERLERWRAASRNPGTVEEIKEVVHNVRLALAEDLDTQRAIAVLDQWAEQALGAAEASEEASDVLRTAVNSLLGVRL</sequence>
<feature type="chain" id="PRO_0000400437" description="L-cysteine:1D-myo-inositol 2-amino-2-deoxy-alpha-D-glucopyranoside ligase">
    <location>
        <begin position="1"/>
        <end position="414"/>
    </location>
</feature>
<feature type="short sequence motif" description="'HIGH' region" evidence="1">
    <location>
        <begin position="46"/>
        <end position="56"/>
    </location>
</feature>
<feature type="short sequence motif" description="'ERGGDP' region" evidence="1">
    <location>
        <begin position="188"/>
        <end position="193"/>
    </location>
</feature>
<feature type="short sequence motif" description="'KMSKS' region" evidence="1">
    <location>
        <begin position="290"/>
        <end position="294"/>
    </location>
</feature>
<feature type="binding site" evidence="1">
    <location>
        <begin position="44"/>
        <end position="47"/>
    </location>
    <ligand>
        <name>L-cysteinyl-5'-AMP</name>
        <dbReference type="ChEBI" id="CHEBI:144924"/>
    </ligand>
</feature>
<feature type="binding site" evidence="1">
    <location>
        <position position="44"/>
    </location>
    <ligand>
        <name>Zn(2+)</name>
        <dbReference type="ChEBI" id="CHEBI:29105"/>
    </ligand>
</feature>
<feature type="binding site" evidence="1">
    <location>
        <position position="59"/>
    </location>
    <ligand>
        <name>L-cysteinyl-5'-AMP</name>
        <dbReference type="ChEBI" id="CHEBI:144924"/>
    </ligand>
</feature>
<feature type="binding site" evidence="1">
    <location>
        <begin position="82"/>
        <end position="84"/>
    </location>
    <ligand>
        <name>L-cysteinyl-5'-AMP</name>
        <dbReference type="ChEBI" id="CHEBI:144924"/>
    </ligand>
</feature>
<feature type="binding site" evidence="1">
    <location>
        <position position="228"/>
    </location>
    <ligand>
        <name>L-cysteinyl-5'-AMP</name>
        <dbReference type="ChEBI" id="CHEBI:144924"/>
    </ligand>
</feature>
<feature type="binding site" evidence="1">
    <location>
        <position position="232"/>
    </location>
    <ligand>
        <name>Zn(2+)</name>
        <dbReference type="ChEBI" id="CHEBI:29105"/>
    </ligand>
</feature>
<feature type="binding site" evidence="1">
    <location>
        <begin position="250"/>
        <end position="252"/>
    </location>
    <ligand>
        <name>L-cysteinyl-5'-AMP</name>
        <dbReference type="ChEBI" id="CHEBI:144924"/>
    </ligand>
</feature>
<feature type="binding site" evidence="1">
    <location>
        <position position="257"/>
    </location>
    <ligand>
        <name>Zn(2+)</name>
        <dbReference type="ChEBI" id="CHEBI:29105"/>
    </ligand>
</feature>
<feature type="binding site" evidence="1">
    <location>
        <position position="284"/>
    </location>
    <ligand>
        <name>L-cysteinyl-5'-AMP</name>
        <dbReference type="ChEBI" id="CHEBI:144924"/>
    </ligand>
</feature>
<organism>
    <name type="scientific">Corynebacterium aurimucosum (strain ATCC 700975 / DSM 44827 / CIP 107346 / CN-1)</name>
    <name type="common">Corynebacterium nigricans</name>
    <dbReference type="NCBI Taxonomy" id="548476"/>
    <lineage>
        <taxon>Bacteria</taxon>
        <taxon>Bacillati</taxon>
        <taxon>Actinomycetota</taxon>
        <taxon>Actinomycetes</taxon>
        <taxon>Mycobacteriales</taxon>
        <taxon>Corynebacteriaceae</taxon>
        <taxon>Corynebacterium</taxon>
    </lineage>
</organism>
<keyword id="KW-0067">ATP-binding</keyword>
<keyword id="KW-0436">Ligase</keyword>
<keyword id="KW-0479">Metal-binding</keyword>
<keyword id="KW-0547">Nucleotide-binding</keyword>
<keyword id="KW-1185">Reference proteome</keyword>
<keyword id="KW-0862">Zinc</keyword>
<protein>
    <recommendedName>
        <fullName evidence="1">L-cysteine:1D-myo-inositol 2-amino-2-deoxy-alpha-D-glucopyranoside ligase</fullName>
        <shortName evidence="1">L-Cys:GlcN-Ins ligase</shortName>
        <ecNumber evidence="1">6.3.1.13</ecNumber>
    </recommendedName>
    <alternativeName>
        <fullName evidence="1">Mycothiol ligase</fullName>
        <shortName evidence="1">MSH ligase</shortName>
    </alternativeName>
</protein>
<reference key="1">
    <citation type="journal article" date="2010" name="BMC Genomics">
        <title>Complete genome sequence and lifestyle of black-pigmented Corynebacterium aurimucosum ATCC 700975 (formerly C. nigricans CN-1) isolated from a vaginal swab of a woman with spontaneous abortion.</title>
        <authorList>
            <person name="Trost E."/>
            <person name="Gotker S."/>
            <person name="Schneider J."/>
            <person name="Schneiker-Bekel S."/>
            <person name="Szczepanowski R."/>
            <person name="Tilker A."/>
            <person name="Viehoever P."/>
            <person name="Arnold W."/>
            <person name="Bekel T."/>
            <person name="Blom J."/>
            <person name="Gartemann K.H."/>
            <person name="Linke B."/>
            <person name="Goesmann A."/>
            <person name="Puhler A."/>
            <person name="Shukla S.K."/>
            <person name="Tauch A."/>
        </authorList>
    </citation>
    <scope>NUCLEOTIDE SEQUENCE [LARGE SCALE GENOMIC DNA]</scope>
    <source>
        <strain>ATCC 700975 / DSM 44827 / CIP 107346 / CN-1</strain>
    </source>
</reference>
<proteinExistence type="inferred from homology"/>
<dbReference type="EC" id="6.3.1.13" evidence="1"/>
<dbReference type="EMBL" id="CP001601">
    <property type="protein sequence ID" value="ACP32843.1"/>
    <property type="molecule type" value="Genomic_DNA"/>
</dbReference>
<dbReference type="RefSeq" id="WP_010186666.1">
    <property type="nucleotide sequence ID" value="NC_012590.1"/>
</dbReference>
<dbReference type="SMR" id="C3PG89"/>
<dbReference type="STRING" id="548476.cauri_1250"/>
<dbReference type="GeneID" id="31923873"/>
<dbReference type="KEGG" id="car:cauri_1250"/>
<dbReference type="eggNOG" id="COG0215">
    <property type="taxonomic scope" value="Bacteria"/>
</dbReference>
<dbReference type="HOGENOM" id="CLU_013528_0_0_11"/>
<dbReference type="OrthoDB" id="9815130at2"/>
<dbReference type="Proteomes" id="UP000002077">
    <property type="component" value="Chromosome"/>
</dbReference>
<dbReference type="GO" id="GO:0005829">
    <property type="term" value="C:cytosol"/>
    <property type="evidence" value="ECO:0007669"/>
    <property type="project" value="TreeGrafter"/>
</dbReference>
<dbReference type="GO" id="GO:0005524">
    <property type="term" value="F:ATP binding"/>
    <property type="evidence" value="ECO:0007669"/>
    <property type="project" value="UniProtKB-KW"/>
</dbReference>
<dbReference type="GO" id="GO:0035446">
    <property type="term" value="F:cysteine-glucosaminylinositol ligase activity"/>
    <property type="evidence" value="ECO:0007669"/>
    <property type="project" value="UniProtKB-UniRule"/>
</dbReference>
<dbReference type="GO" id="GO:0004817">
    <property type="term" value="F:cysteine-tRNA ligase activity"/>
    <property type="evidence" value="ECO:0007669"/>
    <property type="project" value="TreeGrafter"/>
</dbReference>
<dbReference type="GO" id="GO:0008270">
    <property type="term" value="F:zinc ion binding"/>
    <property type="evidence" value="ECO:0007669"/>
    <property type="project" value="UniProtKB-UniRule"/>
</dbReference>
<dbReference type="GO" id="GO:0006423">
    <property type="term" value="P:cysteinyl-tRNA aminoacylation"/>
    <property type="evidence" value="ECO:0007669"/>
    <property type="project" value="TreeGrafter"/>
</dbReference>
<dbReference type="GO" id="GO:0010125">
    <property type="term" value="P:mycothiol biosynthetic process"/>
    <property type="evidence" value="ECO:0007669"/>
    <property type="project" value="UniProtKB-UniRule"/>
</dbReference>
<dbReference type="CDD" id="cd00672">
    <property type="entry name" value="CysRS_core"/>
    <property type="match status" value="1"/>
</dbReference>
<dbReference type="Gene3D" id="1.20.120.640">
    <property type="entry name" value="Anticodon-binding domain of a subclass of class I aminoacyl-tRNA synthetases"/>
    <property type="match status" value="1"/>
</dbReference>
<dbReference type="Gene3D" id="3.40.50.620">
    <property type="entry name" value="HUPs"/>
    <property type="match status" value="1"/>
</dbReference>
<dbReference type="HAMAP" id="MF_01697">
    <property type="entry name" value="MshC"/>
    <property type="match status" value="1"/>
</dbReference>
<dbReference type="InterPro" id="IPR024909">
    <property type="entry name" value="Cys-tRNA/MSH_ligase"/>
</dbReference>
<dbReference type="InterPro" id="IPR017812">
    <property type="entry name" value="Mycothiol_ligase_MshC"/>
</dbReference>
<dbReference type="InterPro" id="IPR014729">
    <property type="entry name" value="Rossmann-like_a/b/a_fold"/>
</dbReference>
<dbReference type="InterPro" id="IPR032678">
    <property type="entry name" value="tRNA-synt_1_cat_dom"/>
</dbReference>
<dbReference type="NCBIfam" id="TIGR03447">
    <property type="entry name" value="mycothiol_MshC"/>
    <property type="match status" value="1"/>
</dbReference>
<dbReference type="PANTHER" id="PTHR10890:SF3">
    <property type="entry name" value="CYSTEINE--TRNA LIGASE, CYTOPLASMIC"/>
    <property type="match status" value="1"/>
</dbReference>
<dbReference type="PANTHER" id="PTHR10890">
    <property type="entry name" value="CYSTEINYL-TRNA SYNTHETASE"/>
    <property type="match status" value="1"/>
</dbReference>
<dbReference type="Pfam" id="PF01406">
    <property type="entry name" value="tRNA-synt_1e"/>
    <property type="match status" value="1"/>
</dbReference>
<dbReference type="PRINTS" id="PR00983">
    <property type="entry name" value="TRNASYNTHCYS"/>
</dbReference>
<dbReference type="SUPFAM" id="SSF52374">
    <property type="entry name" value="Nucleotidylyl transferase"/>
    <property type="match status" value="1"/>
</dbReference>
<accession>C3PG89</accession>
<name>MSHC_CORA7</name>
<evidence type="ECO:0000255" key="1">
    <source>
        <dbReference type="HAMAP-Rule" id="MF_01697"/>
    </source>
</evidence>
<gene>
    <name evidence="1" type="primary">mshC</name>
    <name type="ordered locus">cauri_1250</name>
</gene>
<comment type="function">
    <text evidence="1">Catalyzes the ATP-dependent condensation of GlcN-Ins and L-cysteine to form L-Cys-GlcN-Ins.</text>
</comment>
<comment type="catalytic activity">
    <reaction evidence="1">
        <text>1D-myo-inositol 2-amino-2-deoxy-alpha-D-glucopyranoside + L-cysteine + ATP = 1D-myo-inositol 2-(L-cysteinylamino)-2-deoxy-alpha-D-glucopyranoside + AMP + diphosphate + H(+)</text>
        <dbReference type="Rhea" id="RHEA:26176"/>
        <dbReference type="ChEBI" id="CHEBI:15378"/>
        <dbReference type="ChEBI" id="CHEBI:30616"/>
        <dbReference type="ChEBI" id="CHEBI:33019"/>
        <dbReference type="ChEBI" id="CHEBI:35235"/>
        <dbReference type="ChEBI" id="CHEBI:58886"/>
        <dbReference type="ChEBI" id="CHEBI:58887"/>
        <dbReference type="ChEBI" id="CHEBI:456215"/>
        <dbReference type="EC" id="6.3.1.13"/>
    </reaction>
</comment>
<comment type="cofactor">
    <cofactor evidence="1">
        <name>Zn(2+)</name>
        <dbReference type="ChEBI" id="CHEBI:29105"/>
    </cofactor>
    <text evidence="1">Binds 1 zinc ion per subunit.</text>
</comment>
<comment type="subunit">
    <text evidence="1">Monomer.</text>
</comment>
<comment type="similarity">
    <text evidence="1">Belongs to the class-I aminoacyl-tRNA synthetase family. MshC subfamily.</text>
</comment>